<dbReference type="EMBL" id="U19028">
    <property type="status" value="NOT_ANNOTATED_CDS"/>
    <property type="molecule type" value="Genomic_DNA"/>
</dbReference>
<dbReference type="EMBL" id="AF479968">
    <property type="protein sequence ID" value="AAL79281.1"/>
    <property type="molecule type" value="Genomic_DNA"/>
</dbReference>
<dbReference type="STRING" id="4932.YLR347W-A"/>
<dbReference type="PaxDb" id="4932-YLR347W-A"/>
<dbReference type="EnsemblFungi" id="YLR347W-A_mRNA">
    <property type="protein sequence ID" value="YLR347W-A"/>
    <property type="gene ID" value="YLR347W-A"/>
</dbReference>
<dbReference type="AGR" id="SGD:S000028681"/>
<dbReference type="SGD" id="S000028681">
    <property type="gene designation" value="YLR347W-A"/>
</dbReference>
<dbReference type="HOGENOM" id="CLU_3191650_0_0_1"/>
<reference key="1">
    <citation type="journal article" date="1997" name="Nature">
        <title>The nucleotide sequence of Saccharomyces cerevisiae chromosome XII.</title>
        <authorList>
            <person name="Johnston M."/>
            <person name="Hillier L.W."/>
            <person name="Riles L."/>
            <person name="Albermann K."/>
            <person name="Andre B."/>
            <person name="Ansorge W."/>
            <person name="Benes V."/>
            <person name="Brueckner M."/>
            <person name="Delius H."/>
            <person name="Dubois E."/>
            <person name="Duesterhoeft A."/>
            <person name="Entian K.-D."/>
            <person name="Floeth M."/>
            <person name="Goffeau A."/>
            <person name="Hebling U."/>
            <person name="Heumann K."/>
            <person name="Heuss-Neitzel D."/>
            <person name="Hilbert H."/>
            <person name="Hilger F."/>
            <person name="Kleine K."/>
            <person name="Koetter P."/>
            <person name="Louis E.J."/>
            <person name="Messenguy F."/>
            <person name="Mewes H.-W."/>
            <person name="Miosga T."/>
            <person name="Moestl D."/>
            <person name="Mueller-Auer S."/>
            <person name="Nentwich U."/>
            <person name="Obermaier B."/>
            <person name="Piravandi E."/>
            <person name="Pohl T.M."/>
            <person name="Portetelle D."/>
            <person name="Purnelle B."/>
            <person name="Rechmann S."/>
            <person name="Rieger M."/>
            <person name="Rinke M."/>
            <person name="Rose M."/>
            <person name="Scharfe M."/>
            <person name="Scherens B."/>
            <person name="Scholler P."/>
            <person name="Schwager C."/>
            <person name="Schwarz S."/>
            <person name="Underwood A.P."/>
            <person name="Urrestarazu L.A."/>
            <person name="Vandenbol M."/>
            <person name="Verhasselt P."/>
            <person name="Vierendeels F."/>
            <person name="Voet M."/>
            <person name="Volckaert G."/>
            <person name="Voss H."/>
            <person name="Wambutt R."/>
            <person name="Wedler E."/>
            <person name="Wedler H."/>
            <person name="Zimmermann F.K."/>
            <person name="Zollner A."/>
            <person name="Hani J."/>
            <person name="Hoheisel J.D."/>
        </authorList>
    </citation>
    <scope>NUCLEOTIDE SEQUENCE [LARGE SCALE GENOMIC DNA]</scope>
    <source>
        <strain>ATCC 204508 / S288c</strain>
    </source>
</reference>
<reference key="2">
    <citation type="journal article" date="2014" name="G3 (Bethesda)">
        <title>The reference genome sequence of Saccharomyces cerevisiae: Then and now.</title>
        <authorList>
            <person name="Engel S.R."/>
            <person name="Dietrich F.S."/>
            <person name="Fisk D.G."/>
            <person name="Binkley G."/>
            <person name="Balakrishnan R."/>
            <person name="Costanzo M.C."/>
            <person name="Dwight S.S."/>
            <person name="Hitz B.C."/>
            <person name="Karra K."/>
            <person name="Nash R.S."/>
            <person name="Weng S."/>
            <person name="Wong E.D."/>
            <person name="Lloyd P."/>
            <person name="Skrzypek M.S."/>
            <person name="Miyasato S.R."/>
            <person name="Simison M."/>
            <person name="Cherry J.M."/>
        </authorList>
    </citation>
    <scope>GENOME REANNOTATION</scope>
    <source>
        <strain>ATCC 204508 / S288c</strain>
    </source>
</reference>
<reference key="3">
    <citation type="journal article" date="2002" name="Nat. Biotechnol.">
        <title>An integrated approach for finding overlooked genes in yeast.</title>
        <authorList>
            <person name="Kumar A."/>
            <person name="Harrison P.M."/>
            <person name="Cheung K.-H."/>
            <person name="Lan N."/>
            <person name="Echols N."/>
            <person name="Bertone P."/>
            <person name="Miller P."/>
            <person name="Gerstein M.B."/>
            <person name="Snyder M."/>
        </authorList>
    </citation>
    <scope>NUCLEOTIDE SEQUENCE [GENOMIC DNA]</scope>
</reference>
<gene>
    <name type="ordered locus">YLR347W-A</name>
</gene>
<sequence length="46" mass="4735">MEAEVSATVSVAYSTIVVKAEKADARALNSLSILFAAPIKPSTRAG</sequence>
<comment type="miscellaneous">
    <text evidence="1">Completely overlaps KAP95.</text>
</comment>
<comment type="caution">
    <text evidence="2">Product of a dubious gene prediction unlikely to encode a functional protein. Because of that it is not part of the S.cerevisiae S288c complete/reference proteome set.</text>
</comment>
<proteinExistence type="uncertain"/>
<accession>Q8TGM2</accession>
<feature type="chain" id="PRO_0000299639" description="Putative uncharacterized protein YLR347W-A">
    <location>
        <begin position="1"/>
        <end position="46"/>
    </location>
</feature>
<evidence type="ECO:0000305" key="1"/>
<evidence type="ECO:0000305" key="2">
    <source>
    </source>
</evidence>
<protein>
    <recommendedName>
        <fullName>Putative uncharacterized protein YLR347W-A</fullName>
    </recommendedName>
</protein>
<organism>
    <name type="scientific">Saccharomyces cerevisiae (strain ATCC 204508 / S288c)</name>
    <name type="common">Baker's yeast</name>
    <dbReference type="NCBI Taxonomy" id="559292"/>
    <lineage>
        <taxon>Eukaryota</taxon>
        <taxon>Fungi</taxon>
        <taxon>Dikarya</taxon>
        <taxon>Ascomycota</taxon>
        <taxon>Saccharomycotina</taxon>
        <taxon>Saccharomycetes</taxon>
        <taxon>Saccharomycetales</taxon>
        <taxon>Saccharomycetaceae</taxon>
        <taxon>Saccharomyces</taxon>
    </lineage>
</organism>
<name>YL347_YEAST</name>